<name>DSS1_CAEBR</name>
<accession>A8XLU5</accession>
<gene>
    <name evidence="5" type="primary">dss-1</name>
    <name type="ORF">CBG15145</name>
</gene>
<reference evidence="5" key="1">
    <citation type="journal article" date="2003" name="PLoS Biol.">
        <title>The genome sequence of Caenorhabditis briggsae: a platform for comparative genomics.</title>
        <authorList>
            <person name="Stein L.D."/>
            <person name="Bao Z."/>
            <person name="Blasiar D."/>
            <person name="Blumenthal T."/>
            <person name="Brent M.R."/>
            <person name="Chen N."/>
            <person name="Chinwalla A."/>
            <person name="Clarke L."/>
            <person name="Clee C."/>
            <person name="Coghlan A."/>
            <person name="Coulson A."/>
            <person name="D'Eustachio P."/>
            <person name="Fitch D.H.A."/>
            <person name="Fulton L.A."/>
            <person name="Fulton R.E."/>
            <person name="Griffiths-Jones S."/>
            <person name="Harris T.W."/>
            <person name="Hillier L.W."/>
            <person name="Kamath R."/>
            <person name="Kuwabara P.E."/>
            <person name="Mardis E.R."/>
            <person name="Marra M.A."/>
            <person name="Miner T.L."/>
            <person name="Minx P."/>
            <person name="Mullikin J.C."/>
            <person name="Plumb R.W."/>
            <person name="Rogers J."/>
            <person name="Schein J.E."/>
            <person name="Sohrmann M."/>
            <person name="Spieth J."/>
            <person name="Stajich J.E."/>
            <person name="Wei C."/>
            <person name="Willey D."/>
            <person name="Wilson R.K."/>
            <person name="Durbin R.M."/>
            <person name="Waterston R.H."/>
        </authorList>
    </citation>
    <scope>NUCLEOTIDE SEQUENCE [LARGE SCALE GENOMIC DNA]</scope>
    <source>
        <strain>AF16</strain>
    </source>
</reference>
<keyword id="KW-0963">Cytoplasm</keyword>
<keyword id="KW-0217">Developmental protein</keyword>
<keyword id="KW-0539">Nucleus</keyword>
<keyword id="KW-0647">Proteasome</keyword>
<keyword id="KW-1185">Reference proteome</keyword>
<sequence length="76" mass="9012">MSSTTVTKKDQKTVVEKKETEEEEFEEFPIQEWPERADGEDDEVNVWEDNWDDETHESEFSKQLKEELRKGGHPIA</sequence>
<protein>
    <recommendedName>
        <fullName evidence="2">Probable 26S proteasome complex subunit dss-1</fullName>
    </recommendedName>
    <alternativeName>
        <fullName evidence="2">Deleted in split hand/split foot protein 1 homolog</fullName>
    </alternativeName>
</protein>
<comment type="function">
    <text evidence="2">Subunit of the 26S proteasome which plays a role in ubiquitin-dependent proteolysis. Has an essential role in oogenesis and larval growth. Required for intestinal function and default lifespan (By similarity).</text>
</comment>
<comment type="subunit">
    <text evidence="1">Part of the 26S proteasome.</text>
</comment>
<comment type="subcellular location">
    <subcellularLocation>
        <location evidence="2">Nucleus</location>
    </subcellularLocation>
    <subcellularLocation>
        <location evidence="2">Cytoplasm</location>
    </subcellularLocation>
    <text evidence="2">Diffuse in cytoplasm.</text>
</comment>
<comment type="similarity">
    <text evidence="3">Belongs to the DSS1/SEM1 family.</text>
</comment>
<proteinExistence type="inferred from homology"/>
<organism>
    <name type="scientific">Caenorhabditis briggsae</name>
    <dbReference type="NCBI Taxonomy" id="6238"/>
    <lineage>
        <taxon>Eukaryota</taxon>
        <taxon>Metazoa</taxon>
        <taxon>Ecdysozoa</taxon>
        <taxon>Nematoda</taxon>
        <taxon>Chromadorea</taxon>
        <taxon>Rhabditida</taxon>
        <taxon>Rhabditina</taxon>
        <taxon>Rhabditomorpha</taxon>
        <taxon>Rhabditoidea</taxon>
        <taxon>Rhabditidae</taxon>
        <taxon>Peloderinae</taxon>
        <taxon>Caenorhabditis</taxon>
    </lineage>
</organism>
<feature type="chain" id="PRO_0000395331" description="Probable 26S proteasome complex subunit dss-1">
    <location>
        <begin position="1"/>
        <end position="76"/>
    </location>
</feature>
<feature type="region of interest" description="Disordered" evidence="4">
    <location>
        <begin position="1"/>
        <end position="28"/>
    </location>
</feature>
<feature type="region of interest" description="Disordered" evidence="4">
    <location>
        <begin position="52"/>
        <end position="76"/>
    </location>
</feature>
<feature type="compositionally biased region" description="Basic and acidic residues" evidence="4">
    <location>
        <begin position="7"/>
        <end position="20"/>
    </location>
</feature>
<feature type="compositionally biased region" description="Basic and acidic residues" evidence="4">
    <location>
        <begin position="57"/>
        <end position="70"/>
    </location>
</feature>
<dbReference type="EMBL" id="HE601055">
    <property type="protein sequence ID" value="CAP33599.1"/>
    <property type="molecule type" value="Genomic_DNA"/>
</dbReference>
<dbReference type="SMR" id="A8XLU5"/>
<dbReference type="FunCoup" id="A8XLU5">
    <property type="interactions" value="633"/>
</dbReference>
<dbReference type="STRING" id="6238.A8XLU5"/>
<dbReference type="EnsemblMetazoa" id="CBG15145.1">
    <property type="protein sequence ID" value="CBG15145.1"/>
    <property type="gene ID" value="WBGene00035473"/>
</dbReference>
<dbReference type="KEGG" id="cbr:CBG_15145"/>
<dbReference type="CTD" id="8584868"/>
<dbReference type="WormBase" id="CBG15145">
    <property type="protein sequence ID" value="CBP23175"/>
    <property type="gene ID" value="WBGene00035473"/>
    <property type="gene designation" value="Cbr-dss-1"/>
</dbReference>
<dbReference type="eggNOG" id="KOG4764">
    <property type="taxonomic scope" value="Eukaryota"/>
</dbReference>
<dbReference type="HOGENOM" id="CLU_141774_1_2_1"/>
<dbReference type="InParanoid" id="A8XLU5"/>
<dbReference type="OMA" id="EWPERRE"/>
<dbReference type="Proteomes" id="UP000008549">
    <property type="component" value="Unassembled WGS sequence"/>
</dbReference>
<dbReference type="GO" id="GO:0005737">
    <property type="term" value="C:cytoplasm"/>
    <property type="evidence" value="ECO:0007669"/>
    <property type="project" value="UniProtKB-SubCell"/>
</dbReference>
<dbReference type="GO" id="GO:0005634">
    <property type="term" value="C:nucleus"/>
    <property type="evidence" value="ECO:0007669"/>
    <property type="project" value="UniProtKB-SubCell"/>
</dbReference>
<dbReference type="GO" id="GO:0000502">
    <property type="term" value="C:proteasome complex"/>
    <property type="evidence" value="ECO:0000318"/>
    <property type="project" value="GO_Central"/>
</dbReference>
<dbReference type="GO" id="GO:0008541">
    <property type="term" value="C:proteasome regulatory particle, lid subcomplex"/>
    <property type="evidence" value="ECO:0007669"/>
    <property type="project" value="InterPro"/>
</dbReference>
<dbReference type="GO" id="GO:0000724">
    <property type="term" value="P:double-strand break repair via homologous recombination"/>
    <property type="evidence" value="ECO:0000318"/>
    <property type="project" value="GO_Central"/>
</dbReference>
<dbReference type="GO" id="GO:0009792">
    <property type="term" value="P:embryo development ending in birth or egg hatching"/>
    <property type="evidence" value="ECO:0007669"/>
    <property type="project" value="EnsemblMetazoa"/>
</dbReference>
<dbReference type="GO" id="GO:0060429">
    <property type="term" value="P:epithelium development"/>
    <property type="evidence" value="ECO:0007669"/>
    <property type="project" value="EnsemblMetazoa"/>
</dbReference>
<dbReference type="GO" id="GO:0050892">
    <property type="term" value="P:intestinal absorption"/>
    <property type="evidence" value="ECO:0007669"/>
    <property type="project" value="EnsemblMetazoa"/>
</dbReference>
<dbReference type="GO" id="GO:0006406">
    <property type="term" value="P:mRNA export from nucleus"/>
    <property type="evidence" value="ECO:0007669"/>
    <property type="project" value="InterPro"/>
</dbReference>
<dbReference type="GO" id="GO:0048477">
    <property type="term" value="P:oogenesis"/>
    <property type="evidence" value="ECO:0007669"/>
    <property type="project" value="EnsemblMetazoa"/>
</dbReference>
<dbReference type="GO" id="GO:0040018">
    <property type="term" value="P:positive regulation of multicellular organism growth"/>
    <property type="evidence" value="ECO:0007669"/>
    <property type="project" value="EnsemblMetazoa"/>
</dbReference>
<dbReference type="GO" id="GO:0031398">
    <property type="term" value="P:positive regulation of protein ubiquitination"/>
    <property type="evidence" value="ECO:0007669"/>
    <property type="project" value="EnsemblMetazoa"/>
</dbReference>
<dbReference type="GO" id="GO:0043248">
    <property type="term" value="P:proteasome assembly"/>
    <property type="evidence" value="ECO:0007669"/>
    <property type="project" value="InterPro"/>
</dbReference>
<dbReference type="GO" id="GO:0040025">
    <property type="term" value="P:vulval development"/>
    <property type="evidence" value="ECO:0007669"/>
    <property type="project" value="EnsemblMetazoa"/>
</dbReference>
<dbReference type="CDD" id="cd13768">
    <property type="entry name" value="DSS1_Sem1"/>
    <property type="match status" value="1"/>
</dbReference>
<dbReference type="InterPro" id="IPR007834">
    <property type="entry name" value="DSS1_SEM1"/>
</dbReference>
<dbReference type="PANTHER" id="PTHR16771">
    <property type="entry name" value="26 PROTEASOME COMPLEX SUBUNIT DSS1"/>
    <property type="match status" value="1"/>
</dbReference>
<dbReference type="PANTHER" id="PTHR16771:SF0">
    <property type="entry name" value="26S PROTEASOME COMPLEX SUBUNIT SEM1"/>
    <property type="match status" value="1"/>
</dbReference>
<dbReference type="Pfam" id="PF05160">
    <property type="entry name" value="DSS1_SEM1"/>
    <property type="match status" value="1"/>
</dbReference>
<dbReference type="SMART" id="SM01385">
    <property type="entry name" value="DSS1_SEM1"/>
    <property type="match status" value="1"/>
</dbReference>
<evidence type="ECO:0000250" key="1">
    <source>
        <dbReference type="UniProtKB" id="P60896"/>
    </source>
</evidence>
<evidence type="ECO:0000250" key="2">
    <source>
        <dbReference type="UniProtKB" id="Q95Y72"/>
    </source>
</evidence>
<evidence type="ECO:0000255" key="3"/>
<evidence type="ECO:0000256" key="4">
    <source>
        <dbReference type="SAM" id="MobiDB-lite"/>
    </source>
</evidence>
<evidence type="ECO:0000312" key="5">
    <source>
        <dbReference type="EMBL" id="CAP33599.1"/>
    </source>
</evidence>